<accession>Q49CC1</accession>
<feature type="propeptide" id="PRO_0000299993" evidence="1">
    <location>
        <begin position="1"/>
        <end position="2"/>
    </location>
</feature>
<feature type="chain" id="PRO_0000299994" description="Ribulose bisphosphate carboxylase large chain">
    <location>
        <begin position="3"/>
        <end position="481"/>
    </location>
</feature>
<feature type="active site" description="Proton acceptor" evidence="1">
    <location>
        <position position="175"/>
    </location>
</feature>
<feature type="active site" description="Proton acceptor" evidence="1">
    <location>
        <position position="294"/>
    </location>
</feature>
<feature type="binding site" description="in homodimeric partner" evidence="1">
    <location>
        <position position="123"/>
    </location>
    <ligand>
        <name>substrate</name>
    </ligand>
</feature>
<feature type="binding site" evidence="1">
    <location>
        <position position="173"/>
    </location>
    <ligand>
        <name>substrate</name>
    </ligand>
</feature>
<feature type="binding site" evidence="1">
    <location>
        <position position="177"/>
    </location>
    <ligand>
        <name>substrate</name>
    </ligand>
</feature>
<feature type="binding site" description="via carbamate group" evidence="1">
    <location>
        <position position="201"/>
    </location>
    <ligand>
        <name>Mg(2+)</name>
        <dbReference type="ChEBI" id="CHEBI:18420"/>
    </ligand>
</feature>
<feature type="binding site" evidence="1">
    <location>
        <position position="203"/>
    </location>
    <ligand>
        <name>Mg(2+)</name>
        <dbReference type="ChEBI" id="CHEBI:18420"/>
    </ligand>
</feature>
<feature type="binding site" evidence="1">
    <location>
        <position position="204"/>
    </location>
    <ligand>
        <name>Mg(2+)</name>
        <dbReference type="ChEBI" id="CHEBI:18420"/>
    </ligand>
</feature>
<feature type="binding site" evidence="1">
    <location>
        <position position="295"/>
    </location>
    <ligand>
        <name>substrate</name>
    </ligand>
</feature>
<feature type="binding site" evidence="1">
    <location>
        <position position="327"/>
    </location>
    <ligand>
        <name>substrate</name>
    </ligand>
</feature>
<feature type="binding site" evidence="1">
    <location>
        <position position="379"/>
    </location>
    <ligand>
        <name>substrate</name>
    </ligand>
</feature>
<feature type="site" description="Transition state stabilizer" evidence="1">
    <location>
        <position position="334"/>
    </location>
</feature>
<feature type="modified residue" description="N-acetylproline" evidence="1">
    <location>
        <position position="3"/>
    </location>
</feature>
<feature type="modified residue" description="N6,N6,N6-trimethyllysine" evidence="1">
    <location>
        <position position="14"/>
    </location>
</feature>
<feature type="modified residue" description="N6-carboxylysine" evidence="1">
    <location>
        <position position="201"/>
    </location>
</feature>
<feature type="disulfide bond" description="Interchain; in linked form" evidence="1">
    <location>
        <position position="247"/>
    </location>
</feature>
<evidence type="ECO:0000255" key="1">
    <source>
        <dbReference type="HAMAP-Rule" id="MF_01338"/>
    </source>
</evidence>
<evidence type="ECO:0000305" key="2"/>
<gene>
    <name evidence="1" type="primary">rbcL</name>
</gene>
<comment type="function">
    <text evidence="1">RuBisCO catalyzes two reactions: the carboxylation of D-ribulose 1,5-bisphosphate, the primary event in carbon dioxide fixation, as well as the oxidative fragmentation of the pentose substrate in the photorespiration process. Both reactions occur simultaneously and in competition at the same active site.</text>
</comment>
<comment type="catalytic activity">
    <reaction evidence="1">
        <text>2 (2R)-3-phosphoglycerate + 2 H(+) = D-ribulose 1,5-bisphosphate + CO2 + H2O</text>
        <dbReference type="Rhea" id="RHEA:23124"/>
        <dbReference type="ChEBI" id="CHEBI:15377"/>
        <dbReference type="ChEBI" id="CHEBI:15378"/>
        <dbReference type="ChEBI" id="CHEBI:16526"/>
        <dbReference type="ChEBI" id="CHEBI:57870"/>
        <dbReference type="ChEBI" id="CHEBI:58272"/>
        <dbReference type="EC" id="4.1.1.39"/>
    </reaction>
</comment>
<comment type="catalytic activity">
    <reaction evidence="1">
        <text>D-ribulose 1,5-bisphosphate + O2 = 2-phosphoglycolate + (2R)-3-phosphoglycerate + 2 H(+)</text>
        <dbReference type="Rhea" id="RHEA:36631"/>
        <dbReference type="ChEBI" id="CHEBI:15378"/>
        <dbReference type="ChEBI" id="CHEBI:15379"/>
        <dbReference type="ChEBI" id="CHEBI:57870"/>
        <dbReference type="ChEBI" id="CHEBI:58033"/>
        <dbReference type="ChEBI" id="CHEBI:58272"/>
    </reaction>
</comment>
<comment type="cofactor">
    <cofactor evidence="1">
        <name>Mg(2+)</name>
        <dbReference type="ChEBI" id="CHEBI:18420"/>
    </cofactor>
    <text evidence="1">Binds 1 Mg(2+) ion per subunit.</text>
</comment>
<comment type="subunit">
    <text evidence="1">Heterohexadecamer of 8 large chains and 8 small chains; disulfide-linked. The disulfide link is formed within the large subunit homodimers.</text>
</comment>
<comment type="subcellular location">
    <subcellularLocation>
        <location>Plastid</location>
    </subcellularLocation>
</comment>
<comment type="PTM">
    <text evidence="1">The disulfide bond which can form in the large chain dimeric partners within the hexadecamer appears to be associated with oxidative stress and protein turnover.</text>
</comment>
<comment type="miscellaneous">
    <text evidence="1">The basic functional RuBisCO is composed of a large chain homodimer in a 'head-to-tail' conformation. In form I RuBisCO this homodimer is arranged in a barrel-like tetramer with the small subunits forming a tetrameric 'cap' on each end of the 'barrel'.</text>
</comment>
<comment type="similarity">
    <text evidence="1">Belongs to the RuBisCO large chain family. Type I subfamily.</text>
</comment>
<comment type="caution">
    <text evidence="2">This organism being probably non-photosynthetic, the role of this protein is uncertain.</text>
</comment>
<name>RBL_CUSSA</name>
<reference key="1">
    <citation type="journal article" date="2005" name="J. Mol. Evol.">
        <title>Down the slippery slope: plastid genome evolution in Convolvulaceae.</title>
        <authorList>
            <person name="Stefanovic S."/>
            <person name="Olmstead R.G."/>
        </authorList>
    </citation>
    <scope>NUCLEOTIDE SEQUENCE [GENOMIC DNA]</scope>
</reference>
<proteinExistence type="inferred from homology"/>
<sequence>MSPQTETKTSVGFKAGVKDYKLTYYTPYYETKATDILAAFRVTPQPGVPPEEAGAAVAAESSTGTWTTVWTDGLTSLDRYKGRCYHIERVFGEKDQYIAYVAYPLDLFEEGSVTNMFTSIVGNVFGFKALRALRLEDLRIPPAYTKTFKGPPHGIQVERDKLNKYGRPLLGCTIKPKLGLSAKNYGRAVYECLRGGLDFTKDDENVNSQPFMRWRDRFLFCAEAIYKSQAETGEIKGHYLNATAGTCEEMLRRAYFAKELGVPIIMHDYLTGGFTANTSLAHFCRENGLLLHIHRAMHAVIDRQKNHGIHFRVLAKALRLSGGDHIHAGTVVGKLEGEREITLGFVDLLRDNFVEKDRSRGIYFTQDWVSLPGVLPVASGGIHVWHMPALTDIFGDDSVLQFGGGTLGHPWGNAPGAVANRVALEACVQARNEGLDLAQDGNSIIRQASNWSPELAAACEVWKEIQFNFKSVDTLDLNEIK</sequence>
<geneLocation type="plastid"/>
<dbReference type="EC" id="4.1.1.39" evidence="1"/>
<dbReference type="EMBL" id="AY936346">
    <property type="protein sequence ID" value="AAY58013.1"/>
    <property type="molecule type" value="Genomic_DNA"/>
</dbReference>
<dbReference type="SMR" id="Q49CC1"/>
<dbReference type="GO" id="GO:0009536">
    <property type="term" value="C:plastid"/>
    <property type="evidence" value="ECO:0007669"/>
    <property type="project" value="UniProtKB-SubCell"/>
</dbReference>
<dbReference type="GO" id="GO:0000287">
    <property type="term" value="F:magnesium ion binding"/>
    <property type="evidence" value="ECO:0007669"/>
    <property type="project" value="UniProtKB-UniRule"/>
</dbReference>
<dbReference type="GO" id="GO:0004497">
    <property type="term" value="F:monooxygenase activity"/>
    <property type="evidence" value="ECO:0007669"/>
    <property type="project" value="UniProtKB-KW"/>
</dbReference>
<dbReference type="GO" id="GO:0016984">
    <property type="term" value="F:ribulose-bisphosphate carboxylase activity"/>
    <property type="evidence" value="ECO:0007669"/>
    <property type="project" value="UniProtKB-UniRule"/>
</dbReference>
<dbReference type="GO" id="GO:0009853">
    <property type="term" value="P:photorespiration"/>
    <property type="evidence" value="ECO:0007669"/>
    <property type="project" value="UniProtKB-KW"/>
</dbReference>
<dbReference type="GO" id="GO:0019253">
    <property type="term" value="P:reductive pentose-phosphate cycle"/>
    <property type="evidence" value="ECO:0007669"/>
    <property type="project" value="UniProtKB-UniRule"/>
</dbReference>
<dbReference type="CDD" id="cd08212">
    <property type="entry name" value="RuBisCO_large_I"/>
    <property type="match status" value="1"/>
</dbReference>
<dbReference type="FunFam" id="3.20.20.110:FF:000001">
    <property type="entry name" value="Ribulose bisphosphate carboxylase large chain"/>
    <property type="match status" value="1"/>
</dbReference>
<dbReference type="FunFam" id="3.30.70.150:FF:000001">
    <property type="entry name" value="Ribulose bisphosphate carboxylase large chain"/>
    <property type="match status" value="1"/>
</dbReference>
<dbReference type="Gene3D" id="3.20.20.110">
    <property type="entry name" value="Ribulose bisphosphate carboxylase, large subunit, C-terminal domain"/>
    <property type="match status" value="1"/>
</dbReference>
<dbReference type="Gene3D" id="3.30.70.150">
    <property type="entry name" value="RuBisCO large subunit, N-terminal domain"/>
    <property type="match status" value="1"/>
</dbReference>
<dbReference type="HAMAP" id="MF_01338">
    <property type="entry name" value="RuBisCO_L_type1"/>
    <property type="match status" value="1"/>
</dbReference>
<dbReference type="InterPro" id="IPR033966">
    <property type="entry name" value="RuBisCO"/>
</dbReference>
<dbReference type="InterPro" id="IPR020878">
    <property type="entry name" value="RuBisCo_large_chain_AS"/>
</dbReference>
<dbReference type="InterPro" id="IPR000685">
    <property type="entry name" value="RuBisCO_lsu_C"/>
</dbReference>
<dbReference type="InterPro" id="IPR036376">
    <property type="entry name" value="RuBisCO_lsu_C_sf"/>
</dbReference>
<dbReference type="InterPro" id="IPR017443">
    <property type="entry name" value="RuBisCO_lsu_fd_N"/>
</dbReference>
<dbReference type="InterPro" id="IPR036422">
    <property type="entry name" value="RuBisCO_lsu_N_sf"/>
</dbReference>
<dbReference type="InterPro" id="IPR020888">
    <property type="entry name" value="RuBisCO_lsuI"/>
</dbReference>
<dbReference type="NCBIfam" id="NF003252">
    <property type="entry name" value="PRK04208.1"/>
    <property type="match status" value="1"/>
</dbReference>
<dbReference type="PANTHER" id="PTHR42704">
    <property type="entry name" value="RIBULOSE BISPHOSPHATE CARBOXYLASE"/>
    <property type="match status" value="1"/>
</dbReference>
<dbReference type="PANTHER" id="PTHR42704:SF16">
    <property type="entry name" value="RIBULOSE BISPHOSPHATE CARBOXYLASE LARGE CHAIN"/>
    <property type="match status" value="1"/>
</dbReference>
<dbReference type="Pfam" id="PF00016">
    <property type="entry name" value="RuBisCO_large"/>
    <property type="match status" value="1"/>
</dbReference>
<dbReference type="Pfam" id="PF02788">
    <property type="entry name" value="RuBisCO_large_N"/>
    <property type="match status" value="1"/>
</dbReference>
<dbReference type="SFLD" id="SFLDG01052">
    <property type="entry name" value="RuBisCO"/>
    <property type="match status" value="1"/>
</dbReference>
<dbReference type="SFLD" id="SFLDS00014">
    <property type="entry name" value="RuBisCO"/>
    <property type="match status" value="1"/>
</dbReference>
<dbReference type="SFLD" id="SFLDG00301">
    <property type="entry name" value="RuBisCO-like_proteins"/>
    <property type="match status" value="1"/>
</dbReference>
<dbReference type="SUPFAM" id="SSF51649">
    <property type="entry name" value="RuBisCo, C-terminal domain"/>
    <property type="match status" value="1"/>
</dbReference>
<dbReference type="SUPFAM" id="SSF54966">
    <property type="entry name" value="RuBisCO, large subunit, small (N-terminal) domain"/>
    <property type="match status" value="1"/>
</dbReference>
<dbReference type="PROSITE" id="PS00157">
    <property type="entry name" value="RUBISCO_LARGE"/>
    <property type="match status" value="1"/>
</dbReference>
<organism>
    <name type="scientific">Cuscuta sandwichiana</name>
    <name type="common">Kauna'oa</name>
    <dbReference type="NCBI Taxonomy" id="197374"/>
    <lineage>
        <taxon>Eukaryota</taxon>
        <taxon>Viridiplantae</taxon>
        <taxon>Streptophyta</taxon>
        <taxon>Embryophyta</taxon>
        <taxon>Tracheophyta</taxon>
        <taxon>Spermatophyta</taxon>
        <taxon>Magnoliopsida</taxon>
        <taxon>eudicotyledons</taxon>
        <taxon>Gunneridae</taxon>
        <taxon>Pentapetalae</taxon>
        <taxon>asterids</taxon>
        <taxon>lamiids</taxon>
        <taxon>Solanales</taxon>
        <taxon>Convolvulaceae</taxon>
        <taxon>Cuscuteae</taxon>
        <taxon>Cuscuta</taxon>
        <taxon>Cuscuta subgen. Grammica</taxon>
        <taxon>Cuscuta sect. Cleistogrammica</taxon>
    </lineage>
</organism>
<protein>
    <recommendedName>
        <fullName evidence="1">Ribulose bisphosphate carboxylase large chain</fullName>
        <shortName evidence="1">RuBisCO large subunit</shortName>
        <ecNumber evidence="1">4.1.1.39</ecNumber>
    </recommendedName>
</protein>
<keyword id="KW-0007">Acetylation</keyword>
<keyword id="KW-0113">Calvin cycle</keyword>
<keyword id="KW-0120">Carbon dioxide fixation</keyword>
<keyword id="KW-1015">Disulfide bond</keyword>
<keyword id="KW-0456">Lyase</keyword>
<keyword id="KW-0460">Magnesium</keyword>
<keyword id="KW-0479">Metal-binding</keyword>
<keyword id="KW-0488">Methylation</keyword>
<keyword id="KW-0503">Monooxygenase</keyword>
<keyword id="KW-0560">Oxidoreductase</keyword>
<keyword id="KW-0601">Photorespiration</keyword>
<keyword id="KW-0602">Photosynthesis</keyword>
<keyword id="KW-0934">Plastid</keyword>